<feature type="chain" id="PRO_0000316844" description="Protein prenyltransferase alpha subunit repeat-containing protein 1">
    <location>
        <begin position="1"/>
        <end position="426"/>
    </location>
</feature>
<feature type="repeat" description="PFTA 1">
    <location>
        <begin position="86"/>
        <end position="119"/>
    </location>
</feature>
<feature type="repeat" description="PFTA 2">
    <location>
        <begin position="121"/>
        <end position="154"/>
    </location>
</feature>
<feature type="repeat" description="PFTA 3">
    <location>
        <begin position="180"/>
        <end position="213"/>
    </location>
</feature>
<feature type="repeat" description="PFTA 4">
    <location>
        <begin position="219"/>
        <end position="252"/>
    </location>
</feature>
<feature type="repeat" description="PFTA 5">
    <location>
        <begin position="290"/>
        <end position="323"/>
    </location>
</feature>
<feature type="region of interest" description="Disordered" evidence="1">
    <location>
        <begin position="255"/>
        <end position="279"/>
    </location>
</feature>
<feature type="compositionally biased region" description="Polar residues" evidence="1">
    <location>
        <begin position="262"/>
        <end position="275"/>
    </location>
</feature>
<feature type="sequence conflict" description="In Ref. 2; AAI24322." evidence="2" ref="2">
    <original>S</original>
    <variation>C</variation>
    <location>
        <position position="92"/>
    </location>
</feature>
<feature type="sequence conflict" description="In Ref. 2; AAI24322." evidence="2" ref="2">
    <original>N</original>
    <variation>S</variation>
    <location>
        <position position="270"/>
    </location>
</feature>
<feature type="sequence conflict" description="In Ref. 2; AAI24322." evidence="2" ref="2">
    <original>I</original>
    <variation>T</variation>
    <location>
        <position position="354"/>
    </location>
</feature>
<name>PTAR1_DANRE</name>
<organism>
    <name type="scientific">Danio rerio</name>
    <name type="common">Zebrafish</name>
    <name type="synonym">Brachydanio rerio</name>
    <dbReference type="NCBI Taxonomy" id="7955"/>
    <lineage>
        <taxon>Eukaryota</taxon>
        <taxon>Metazoa</taxon>
        <taxon>Chordata</taxon>
        <taxon>Craniata</taxon>
        <taxon>Vertebrata</taxon>
        <taxon>Euteleostomi</taxon>
        <taxon>Actinopterygii</taxon>
        <taxon>Neopterygii</taxon>
        <taxon>Teleostei</taxon>
        <taxon>Ostariophysi</taxon>
        <taxon>Cypriniformes</taxon>
        <taxon>Danionidae</taxon>
        <taxon>Danioninae</taxon>
        <taxon>Danio</taxon>
    </lineage>
</organism>
<gene>
    <name type="primary">ptar1</name>
    <name type="ORF">si:ch211-117c19.3</name>
</gene>
<sequence>MAESEEEVDVLVQRVVKDITNAFKRNPNIDEIGLIPCPEARYNRSPIVLVENKLGVESWCVKFLLPYVHNKLLLYRQRKQWLDREALVDITSTLLLLNPDFTTAWNVRKELLQCGVLNPEKDLYLGKLALSKHPKSPETWIHRRWVLQRLQKECSPSGQELKDSAESRRQCERLQRALQEEMRVCAEAAGRYPSNYNAWSHRIWVLQNMAKGNLKVLHDELSSTRLWVSMHVSDHSGFHYRQHLLKALAKELSPAAEKDVHTSQQPNGENTATASDDNHHKDVMPRLFHEEIQLCTDLIESYPGHETLWCHRRHVFYLWHQWRREHMQGAGSQSPALTHTDVLLSKELCDNNSISQAMDIDCVLDGSKHGSYTQDTKRLKRGPLLLQPGFPSEHTFISRILTGCRNPEQSRFAIAYRKWLDSVIGQ</sequence>
<accession>A3KPW7</accession>
<accession>Q08CA2</accession>
<evidence type="ECO:0000256" key="1">
    <source>
        <dbReference type="SAM" id="MobiDB-lite"/>
    </source>
</evidence>
<evidence type="ECO:0000305" key="2"/>
<reference key="1">
    <citation type="journal article" date="2013" name="Nature">
        <title>The zebrafish reference genome sequence and its relationship to the human genome.</title>
        <authorList>
            <person name="Howe K."/>
            <person name="Clark M.D."/>
            <person name="Torroja C.F."/>
            <person name="Torrance J."/>
            <person name="Berthelot C."/>
            <person name="Muffato M."/>
            <person name="Collins J.E."/>
            <person name="Humphray S."/>
            <person name="McLaren K."/>
            <person name="Matthews L."/>
            <person name="McLaren S."/>
            <person name="Sealy I."/>
            <person name="Caccamo M."/>
            <person name="Churcher C."/>
            <person name="Scott C."/>
            <person name="Barrett J.C."/>
            <person name="Koch R."/>
            <person name="Rauch G.J."/>
            <person name="White S."/>
            <person name="Chow W."/>
            <person name="Kilian B."/>
            <person name="Quintais L.T."/>
            <person name="Guerra-Assuncao J.A."/>
            <person name="Zhou Y."/>
            <person name="Gu Y."/>
            <person name="Yen J."/>
            <person name="Vogel J.H."/>
            <person name="Eyre T."/>
            <person name="Redmond S."/>
            <person name="Banerjee R."/>
            <person name="Chi J."/>
            <person name="Fu B."/>
            <person name="Langley E."/>
            <person name="Maguire S.F."/>
            <person name="Laird G.K."/>
            <person name="Lloyd D."/>
            <person name="Kenyon E."/>
            <person name="Donaldson S."/>
            <person name="Sehra H."/>
            <person name="Almeida-King J."/>
            <person name="Loveland J."/>
            <person name="Trevanion S."/>
            <person name="Jones M."/>
            <person name="Quail M."/>
            <person name="Willey D."/>
            <person name="Hunt A."/>
            <person name="Burton J."/>
            <person name="Sims S."/>
            <person name="McLay K."/>
            <person name="Plumb B."/>
            <person name="Davis J."/>
            <person name="Clee C."/>
            <person name="Oliver K."/>
            <person name="Clark R."/>
            <person name="Riddle C."/>
            <person name="Elliot D."/>
            <person name="Threadgold G."/>
            <person name="Harden G."/>
            <person name="Ware D."/>
            <person name="Begum S."/>
            <person name="Mortimore B."/>
            <person name="Kerry G."/>
            <person name="Heath P."/>
            <person name="Phillimore B."/>
            <person name="Tracey A."/>
            <person name="Corby N."/>
            <person name="Dunn M."/>
            <person name="Johnson C."/>
            <person name="Wood J."/>
            <person name="Clark S."/>
            <person name="Pelan S."/>
            <person name="Griffiths G."/>
            <person name="Smith M."/>
            <person name="Glithero R."/>
            <person name="Howden P."/>
            <person name="Barker N."/>
            <person name="Lloyd C."/>
            <person name="Stevens C."/>
            <person name="Harley J."/>
            <person name="Holt K."/>
            <person name="Panagiotidis G."/>
            <person name="Lovell J."/>
            <person name="Beasley H."/>
            <person name="Henderson C."/>
            <person name="Gordon D."/>
            <person name="Auger K."/>
            <person name="Wright D."/>
            <person name="Collins J."/>
            <person name="Raisen C."/>
            <person name="Dyer L."/>
            <person name="Leung K."/>
            <person name="Robertson L."/>
            <person name="Ambridge K."/>
            <person name="Leongamornlert D."/>
            <person name="McGuire S."/>
            <person name="Gilderthorp R."/>
            <person name="Griffiths C."/>
            <person name="Manthravadi D."/>
            <person name="Nichol S."/>
            <person name="Barker G."/>
            <person name="Whitehead S."/>
            <person name="Kay M."/>
            <person name="Brown J."/>
            <person name="Murnane C."/>
            <person name="Gray E."/>
            <person name="Humphries M."/>
            <person name="Sycamore N."/>
            <person name="Barker D."/>
            <person name="Saunders D."/>
            <person name="Wallis J."/>
            <person name="Babbage A."/>
            <person name="Hammond S."/>
            <person name="Mashreghi-Mohammadi M."/>
            <person name="Barr L."/>
            <person name="Martin S."/>
            <person name="Wray P."/>
            <person name="Ellington A."/>
            <person name="Matthews N."/>
            <person name="Ellwood M."/>
            <person name="Woodmansey R."/>
            <person name="Clark G."/>
            <person name="Cooper J."/>
            <person name="Tromans A."/>
            <person name="Grafham D."/>
            <person name="Skuce C."/>
            <person name="Pandian R."/>
            <person name="Andrews R."/>
            <person name="Harrison E."/>
            <person name="Kimberley A."/>
            <person name="Garnett J."/>
            <person name="Fosker N."/>
            <person name="Hall R."/>
            <person name="Garner P."/>
            <person name="Kelly D."/>
            <person name="Bird C."/>
            <person name="Palmer S."/>
            <person name="Gehring I."/>
            <person name="Berger A."/>
            <person name="Dooley C.M."/>
            <person name="Ersan-Urun Z."/>
            <person name="Eser C."/>
            <person name="Geiger H."/>
            <person name="Geisler M."/>
            <person name="Karotki L."/>
            <person name="Kirn A."/>
            <person name="Konantz J."/>
            <person name="Konantz M."/>
            <person name="Oberlander M."/>
            <person name="Rudolph-Geiger S."/>
            <person name="Teucke M."/>
            <person name="Lanz C."/>
            <person name="Raddatz G."/>
            <person name="Osoegawa K."/>
            <person name="Zhu B."/>
            <person name="Rapp A."/>
            <person name="Widaa S."/>
            <person name="Langford C."/>
            <person name="Yang F."/>
            <person name="Schuster S.C."/>
            <person name="Carter N.P."/>
            <person name="Harrow J."/>
            <person name="Ning Z."/>
            <person name="Herrero J."/>
            <person name="Searle S.M."/>
            <person name="Enright A."/>
            <person name="Geisler R."/>
            <person name="Plasterk R.H."/>
            <person name="Lee C."/>
            <person name="Westerfield M."/>
            <person name="de Jong P.J."/>
            <person name="Zon L.I."/>
            <person name="Postlethwait J.H."/>
            <person name="Nusslein-Volhard C."/>
            <person name="Hubbard T.J."/>
            <person name="Roest Crollius H."/>
            <person name="Rogers J."/>
            <person name="Stemple D.L."/>
        </authorList>
    </citation>
    <scope>NUCLEOTIDE SEQUENCE [LARGE SCALE GENOMIC DNA]</scope>
    <source>
        <strain>Tuebingen</strain>
    </source>
</reference>
<reference key="2">
    <citation type="submission" date="2006-09" db="EMBL/GenBank/DDBJ databases">
        <authorList>
            <consortium name="NIH - Zebrafish Gene Collection (ZGC) project"/>
        </authorList>
    </citation>
    <scope>NUCLEOTIDE SEQUENCE [LARGE SCALE MRNA]</scope>
    <source>
        <tissue>Ovary</tissue>
    </source>
</reference>
<protein>
    <recommendedName>
        <fullName>Protein prenyltransferase alpha subunit repeat-containing protein 1</fullName>
    </recommendedName>
</protein>
<comment type="similarity">
    <text evidence="2">Belongs to the protein prenyltransferase subunit alpha family.</text>
</comment>
<comment type="sequence caution" evidence="2">
    <conflict type="erroneous initiation">
        <sequence resource="EMBL-CDS" id="AAI24322"/>
    </conflict>
</comment>
<proteinExistence type="evidence at transcript level"/>
<keyword id="KW-0637">Prenyltransferase</keyword>
<keyword id="KW-1185">Reference proteome</keyword>
<keyword id="KW-0677">Repeat</keyword>
<keyword id="KW-0808">Transferase</keyword>
<dbReference type="EMBL" id="BX470086">
    <property type="protein sequence ID" value="CAM56295.1"/>
    <property type="molecule type" value="Genomic_DNA"/>
</dbReference>
<dbReference type="EMBL" id="BC124321">
    <property type="protein sequence ID" value="AAI24322.1"/>
    <property type="status" value="ALT_INIT"/>
    <property type="molecule type" value="mRNA"/>
</dbReference>
<dbReference type="RefSeq" id="NP_001123546.1">
    <property type="nucleotide sequence ID" value="NM_001130074.1"/>
</dbReference>
<dbReference type="SMR" id="A3KPW7"/>
<dbReference type="FunCoup" id="A3KPW7">
    <property type="interactions" value="789"/>
</dbReference>
<dbReference type="STRING" id="7955.ENSDARP00000133028"/>
<dbReference type="PaxDb" id="7955-ENSDARP00000050982"/>
<dbReference type="PeptideAtlas" id="A3KPW7"/>
<dbReference type="Ensembl" id="ENSDART00000162022">
    <property type="protein sequence ID" value="ENSDARP00000133028"/>
    <property type="gene ID" value="ENSDARG00000102338"/>
</dbReference>
<dbReference type="GeneID" id="561820"/>
<dbReference type="KEGG" id="dre:561820"/>
<dbReference type="AGR" id="ZFIN:ZDB-GENE-060526-17"/>
<dbReference type="CTD" id="375743"/>
<dbReference type="ZFIN" id="ZDB-GENE-060526-17">
    <property type="gene designation" value="ptar1"/>
</dbReference>
<dbReference type="eggNOG" id="ENOG502QQUP">
    <property type="taxonomic scope" value="Eukaryota"/>
</dbReference>
<dbReference type="HOGENOM" id="CLU_048186_2_0_1"/>
<dbReference type="InParanoid" id="A3KPW7"/>
<dbReference type="OMA" id="CCNTEQR"/>
<dbReference type="OrthoDB" id="5358702at2759"/>
<dbReference type="PhylomeDB" id="A3KPW7"/>
<dbReference type="TreeFam" id="TF324310"/>
<dbReference type="PRO" id="PR:A3KPW7"/>
<dbReference type="Proteomes" id="UP000000437">
    <property type="component" value="Chromosome 5"/>
</dbReference>
<dbReference type="Bgee" id="ENSDARG00000102338">
    <property type="expression patterns" value="Expressed in mature ovarian follicle and 21 other cell types or tissues"/>
</dbReference>
<dbReference type="GO" id="GO:0005737">
    <property type="term" value="C:cytoplasm"/>
    <property type="evidence" value="ECO:0000318"/>
    <property type="project" value="GO_Central"/>
</dbReference>
<dbReference type="GO" id="GO:0008318">
    <property type="term" value="F:protein prenyltransferase activity"/>
    <property type="evidence" value="ECO:0007669"/>
    <property type="project" value="InterPro"/>
</dbReference>
<dbReference type="FunFam" id="1.25.40.120:FF:000012">
    <property type="entry name" value="Protein prenyltransferase alpha subunit repeat containing 1"/>
    <property type="match status" value="1"/>
</dbReference>
<dbReference type="Gene3D" id="1.25.40.120">
    <property type="entry name" value="Protein prenylyltransferase"/>
    <property type="match status" value="1"/>
</dbReference>
<dbReference type="InterPro" id="IPR002088">
    <property type="entry name" value="Prenyl_trans_a"/>
</dbReference>
<dbReference type="PANTHER" id="PTHR11129">
    <property type="entry name" value="PROTEIN FARNESYLTRANSFERASE ALPHA SUBUNIT/RAB GERANYLGERANYL TRANSFERASE ALPHA SUBUNIT"/>
    <property type="match status" value="1"/>
</dbReference>
<dbReference type="PANTHER" id="PTHR11129:SF3">
    <property type="entry name" value="PROTEIN PRENYLTRANSFERASE ALPHA SUBUNIT REPEAT-CONTAINING PROTEIN 1"/>
    <property type="match status" value="1"/>
</dbReference>
<dbReference type="Pfam" id="PF01239">
    <property type="entry name" value="PPTA"/>
    <property type="match status" value="4"/>
</dbReference>
<dbReference type="SUPFAM" id="SSF48439">
    <property type="entry name" value="Protein prenylyltransferase"/>
    <property type="match status" value="1"/>
</dbReference>
<dbReference type="PROSITE" id="PS51147">
    <property type="entry name" value="PFTA"/>
    <property type="match status" value="5"/>
</dbReference>